<proteinExistence type="evidence at protein level"/>
<organism>
    <name type="scientific">Linum usitatissimum</name>
    <name type="common">Flax</name>
    <name type="synonym">Linum humile</name>
    <dbReference type="NCBI Taxonomy" id="4006"/>
    <lineage>
        <taxon>Eukaryota</taxon>
        <taxon>Viridiplantae</taxon>
        <taxon>Streptophyta</taxon>
        <taxon>Embryophyta</taxon>
        <taxon>Tracheophyta</taxon>
        <taxon>Spermatophyta</taxon>
        <taxon>Magnoliopsida</taxon>
        <taxon>eudicotyledons</taxon>
        <taxon>Gunneridae</taxon>
        <taxon>Pentapetalae</taxon>
        <taxon>rosids</taxon>
        <taxon>fabids</taxon>
        <taxon>Malpighiales</taxon>
        <taxon>Linaceae</taxon>
        <taxon>Linum</taxon>
    </lineage>
</organism>
<protein>
    <recommendedName>
        <fullName>Bifunctional pinoresinol-lariciresinol reductase 1</fullName>
        <shortName>PLR-Lu1</shortName>
    </recommendedName>
    <alternativeName>
        <fullName>(-)-lariciresinol reductase</fullName>
        <ecNumber>1.23.1.4</ecNumber>
    </alternativeName>
    <alternativeName>
        <fullName>(-)-pinoresinol reductase</fullName>
        <ecNumber>1.23.1.3</ecNumber>
    </alternativeName>
</protein>
<sequence>MGRCRVLVVGGTGYIGKRIVKASIEHGHDTYVLKRPETGLDIEKFQLLLSFKKQGAHLVEASFSDHESLVRAVKLVDVVICTVSGAHSRSLLLQLKLVEAIKEAGNVKRFIPSEFGMDPARMGDALEPGRETFDLKMVVRKAIEDANIPHTYISANCFGGYFVGNLSQLGPLTPPSDKVTIYGDGNVKVVYMDEDDVATYTIMTIEDDRTLNKTMYLRPPENVITHRQLVETWEKLSGNQLQKTELSSQDFLALMEGKDVAEQVVIGHLYHIYYEGCLTNFDIDAAQDQVEASSLYPEVEYIRMKDYLMIYL</sequence>
<reference key="1">
    <citation type="journal article" date="2005" name="Phytochemistry">
        <title>Pinoresinol-lariciresinol reductases with different stereospecificity from Linum album and Linum usitatissimum.</title>
        <authorList>
            <person name="von Heimendahl C.B."/>
            <person name="Schafer K.M."/>
            <person name="Eklund P."/>
            <person name="Sjoholm R."/>
            <person name="Schmidt T.J."/>
            <person name="Fuss E."/>
        </authorList>
    </citation>
    <scope>NUCLEOTIDE SEQUENCE [MRNA]</scope>
    <scope>FUNCTION</scope>
    <scope>CATALYTIC ACTIVITY</scope>
</reference>
<reference key="2">
    <citation type="journal article" date="2010" name="Planta Med.">
        <title>Pinoresinol-lariciresinol reductases with opposite enantiospecificity determine the enantiomeric composition of lignans in the different organs of Linum usitatissimum L.</title>
        <authorList>
            <person name="Hemmati S."/>
            <person name="von Heimendahl C.B."/>
            <person name="Klaes M."/>
            <person name="Alfermann A.W."/>
            <person name="Schmidt T.J."/>
            <person name="Fuss E."/>
        </authorList>
    </citation>
    <scope>TISSUE SPECIFICITY</scope>
</reference>
<evidence type="ECO:0000250" key="1"/>
<evidence type="ECO:0000250" key="2">
    <source>
        <dbReference type="UniProtKB" id="Q9LD14"/>
    </source>
</evidence>
<evidence type="ECO:0000269" key="3">
    <source>
    </source>
</evidence>
<evidence type="ECO:0000269" key="4">
    <source>
    </source>
</evidence>
<evidence type="ECO:0000305" key="5"/>
<keyword id="KW-0521">NADP</keyword>
<keyword id="KW-0560">Oxidoreductase</keyword>
<gene>
    <name type="primary">PLR_Lu1</name>
</gene>
<feature type="initiator methionine" description="Removed" evidence="1">
    <location>
        <position position="1"/>
    </location>
</feature>
<feature type="chain" id="PRO_0000422936" description="Bifunctional pinoresinol-lariciresinol reductase 1">
    <location>
        <begin position="2"/>
        <end position="312"/>
    </location>
</feature>
<feature type="active site" description="Proton acceptor" evidence="2">
    <location>
        <position position="136"/>
    </location>
</feature>
<feature type="binding site" evidence="2">
    <location>
        <begin position="10"/>
        <end position="16"/>
    </location>
    <ligand>
        <name>NADP(+)</name>
        <dbReference type="ChEBI" id="CHEBI:58349"/>
    </ligand>
</feature>
<feature type="binding site" evidence="2">
    <location>
        <position position="35"/>
    </location>
    <ligand>
        <name>NADP(+)</name>
        <dbReference type="ChEBI" id="CHEBI:58349"/>
    </ligand>
</feature>
<feature type="binding site" evidence="2">
    <location>
        <position position="44"/>
    </location>
    <ligand>
        <name>NADP(+)</name>
        <dbReference type="ChEBI" id="CHEBI:58349"/>
    </ligand>
</feature>
<feature type="binding site" evidence="2">
    <location>
        <position position="140"/>
    </location>
    <ligand>
        <name>NADP(+)</name>
        <dbReference type="ChEBI" id="CHEBI:58349"/>
    </ligand>
</feature>
<feature type="binding site" evidence="2">
    <location>
        <position position="268"/>
    </location>
    <ligand>
        <name>substrate</name>
    </ligand>
</feature>
<comment type="function">
    <text evidence="3">Reductase involved in lignan biosynthesis. Catalyzes the enantioselective conversion of (-)-pinoresinol into (-)-lariciresinol and of (-)-lariciresinol into (+)-secoisolariciresinol. Abstracts the 4R-hydride from the NADPH cofactor during catalysis.</text>
</comment>
<comment type="catalytic activity">
    <reaction evidence="3">
        <text>(-)-lariciresinol + NADP(+) = (-)-pinoresinol + NADPH + H(+)</text>
        <dbReference type="Rhea" id="RHEA:34427"/>
        <dbReference type="ChEBI" id="CHEBI:15378"/>
        <dbReference type="ChEBI" id="CHEBI:57783"/>
        <dbReference type="ChEBI" id="CHEBI:58349"/>
        <dbReference type="ChEBI" id="CHEBI:67244"/>
        <dbReference type="ChEBI" id="CHEBI:67245"/>
        <dbReference type="EC" id="1.23.1.3"/>
    </reaction>
</comment>
<comment type="catalytic activity">
    <reaction evidence="3">
        <text>(+)-secoisolariciresinol + NADP(+) = (-)-lariciresinol + NADPH + H(+)</text>
        <dbReference type="Rhea" id="RHEA:34431"/>
        <dbReference type="ChEBI" id="CHEBI:15378"/>
        <dbReference type="ChEBI" id="CHEBI:57783"/>
        <dbReference type="ChEBI" id="CHEBI:58349"/>
        <dbReference type="ChEBI" id="CHEBI:67244"/>
        <dbReference type="ChEBI" id="CHEBI:67247"/>
        <dbReference type="EC" id="1.23.1.4"/>
    </reaction>
</comment>
<comment type="subunit">
    <text evidence="1">Dimer.</text>
</comment>
<comment type="tissue specificity">
    <text evidence="4">Expressed in seeds and roots, but not in stems. Detected in leaves.</text>
</comment>
<comment type="similarity">
    <text evidence="5">Belongs to the NmrA-type oxidoreductase family. Isoflavone reductase subfamily.</text>
</comment>
<accession>Q4R0H9</accession>
<name>PILR1_LINUS</name>
<dbReference type="EC" id="1.23.1.4"/>
<dbReference type="EC" id="1.23.1.3"/>
<dbReference type="EMBL" id="AJ849359">
    <property type="protein sequence ID" value="CAH60858.1"/>
    <property type="molecule type" value="mRNA"/>
</dbReference>
<dbReference type="SMR" id="Q4R0H9"/>
<dbReference type="BRENDA" id="1.23.1.3">
    <property type="organism ID" value="3037"/>
</dbReference>
<dbReference type="BRENDA" id="1.23.1.4">
    <property type="organism ID" value="3037"/>
</dbReference>
<dbReference type="GO" id="GO:0010284">
    <property type="term" value="F:lariciresinol reductase activity"/>
    <property type="evidence" value="ECO:0000314"/>
    <property type="project" value="UniProtKB"/>
</dbReference>
<dbReference type="GO" id="GO:0010283">
    <property type="term" value="F:pinoresinol reductase activity"/>
    <property type="evidence" value="ECO:0000314"/>
    <property type="project" value="UniProtKB"/>
</dbReference>
<dbReference type="GO" id="GO:1902135">
    <property type="term" value="P:(+)-secoisolariciresinol biosynthetic process"/>
    <property type="evidence" value="ECO:0000314"/>
    <property type="project" value="UniProtKB"/>
</dbReference>
<dbReference type="GO" id="GO:1902129">
    <property type="term" value="P:(-)-lariciresinol biosynthetic process"/>
    <property type="evidence" value="ECO:0000314"/>
    <property type="project" value="UniProtKB"/>
</dbReference>
<dbReference type="GO" id="GO:1902128">
    <property type="term" value="P:(-)-lariciresinol catabolic process"/>
    <property type="evidence" value="ECO:0000314"/>
    <property type="project" value="UniProtKB"/>
</dbReference>
<dbReference type="GO" id="GO:1902123">
    <property type="term" value="P:(-)-pinoresinol catabolic process"/>
    <property type="evidence" value="ECO:0000314"/>
    <property type="project" value="UniProtKB"/>
</dbReference>
<dbReference type="GO" id="GO:0009807">
    <property type="term" value="P:lignan biosynthetic process"/>
    <property type="evidence" value="ECO:0000314"/>
    <property type="project" value="UniProtKB"/>
</dbReference>
<dbReference type="CDD" id="cd05259">
    <property type="entry name" value="PCBER_SDR_a"/>
    <property type="match status" value="1"/>
</dbReference>
<dbReference type="Gene3D" id="3.40.50.720">
    <property type="entry name" value="NAD(P)-binding Rossmann-like Domain"/>
    <property type="match status" value="1"/>
</dbReference>
<dbReference type="Gene3D" id="3.90.25.10">
    <property type="entry name" value="UDP-galactose 4-epimerase, domain 1"/>
    <property type="match status" value="1"/>
</dbReference>
<dbReference type="InterPro" id="IPR036291">
    <property type="entry name" value="NAD(P)-bd_dom_sf"/>
</dbReference>
<dbReference type="InterPro" id="IPR008030">
    <property type="entry name" value="NmrA-like"/>
</dbReference>
<dbReference type="InterPro" id="IPR050608">
    <property type="entry name" value="NmrA-type/Isoflavone_red_sf"/>
</dbReference>
<dbReference type="InterPro" id="IPR045312">
    <property type="entry name" value="PCBER-like"/>
</dbReference>
<dbReference type="PANTHER" id="PTHR43349:SF4">
    <property type="entry name" value="PINORESINOL REDUCTASE 1-RELATED"/>
    <property type="match status" value="1"/>
</dbReference>
<dbReference type="PANTHER" id="PTHR43349">
    <property type="entry name" value="PINORESINOL REDUCTASE-RELATED"/>
    <property type="match status" value="1"/>
</dbReference>
<dbReference type="Pfam" id="PF05368">
    <property type="entry name" value="NmrA"/>
    <property type="match status" value="1"/>
</dbReference>
<dbReference type="SUPFAM" id="SSF51735">
    <property type="entry name" value="NAD(P)-binding Rossmann-fold domains"/>
    <property type="match status" value="1"/>
</dbReference>